<proteinExistence type="inferred from homology"/>
<name>METK_HELHP</name>
<gene>
    <name evidence="1" type="primary">metK</name>
    <name type="ordered locus">HH_1540</name>
</gene>
<feature type="chain" id="PRO_0000174530" description="S-adenosylmethionine synthase">
    <location>
        <begin position="1"/>
        <end position="386"/>
    </location>
</feature>
<feature type="region of interest" description="Flexible loop" evidence="1">
    <location>
        <begin position="100"/>
        <end position="110"/>
    </location>
</feature>
<feature type="binding site" description="in other chain" evidence="1">
    <location>
        <position position="16"/>
    </location>
    <ligand>
        <name>ATP</name>
        <dbReference type="ChEBI" id="CHEBI:30616"/>
        <note>ligand shared between two neighboring subunits</note>
    </ligand>
</feature>
<feature type="binding site" evidence="1">
    <location>
        <position position="18"/>
    </location>
    <ligand>
        <name>Mg(2+)</name>
        <dbReference type="ChEBI" id="CHEBI:18420"/>
    </ligand>
</feature>
<feature type="binding site" evidence="1">
    <location>
        <position position="44"/>
    </location>
    <ligand>
        <name>K(+)</name>
        <dbReference type="ChEBI" id="CHEBI:29103"/>
    </ligand>
</feature>
<feature type="binding site" description="in other chain" evidence="1">
    <location>
        <position position="57"/>
    </location>
    <ligand>
        <name>L-methionine</name>
        <dbReference type="ChEBI" id="CHEBI:57844"/>
        <note>ligand shared between two neighboring subunits</note>
    </ligand>
</feature>
<feature type="binding site" description="in other chain" evidence="1">
    <location>
        <position position="100"/>
    </location>
    <ligand>
        <name>L-methionine</name>
        <dbReference type="ChEBI" id="CHEBI:57844"/>
        <note>ligand shared between two neighboring subunits</note>
    </ligand>
</feature>
<feature type="binding site" description="in other chain" evidence="1">
    <location>
        <begin position="164"/>
        <end position="166"/>
    </location>
    <ligand>
        <name>ATP</name>
        <dbReference type="ChEBI" id="CHEBI:30616"/>
        <note>ligand shared between two neighboring subunits</note>
    </ligand>
</feature>
<feature type="binding site" description="in other chain" evidence="1">
    <location>
        <begin position="230"/>
        <end position="231"/>
    </location>
    <ligand>
        <name>ATP</name>
        <dbReference type="ChEBI" id="CHEBI:30616"/>
        <note>ligand shared between two neighboring subunits</note>
    </ligand>
</feature>
<feature type="binding site" evidence="1">
    <location>
        <position position="239"/>
    </location>
    <ligand>
        <name>ATP</name>
        <dbReference type="ChEBI" id="CHEBI:30616"/>
        <note>ligand shared between two neighboring subunits</note>
    </ligand>
</feature>
<feature type="binding site" evidence="1">
    <location>
        <position position="239"/>
    </location>
    <ligand>
        <name>L-methionine</name>
        <dbReference type="ChEBI" id="CHEBI:57844"/>
        <note>ligand shared between two neighboring subunits</note>
    </ligand>
</feature>
<feature type="binding site" description="in other chain" evidence="1">
    <location>
        <begin position="245"/>
        <end position="246"/>
    </location>
    <ligand>
        <name>ATP</name>
        <dbReference type="ChEBI" id="CHEBI:30616"/>
        <note>ligand shared between two neighboring subunits</note>
    </ligand>
</feature>
<feature type="binding site" evidence="1">
    <location>
        <position position="262"/>
    </location>
    <ligand>
        <name>ATP</name>
        <dbReference type="ChEBI" id="CHEBI:30616"/>
        <note>ligand shared between two neighboring subunits</note>
    </ligand>
</feature>
<feature type="binding site" evidence="1">
    <location>
        <position position="266"/>
    </location>
    <ligand>
        <name>ATP</name>
        <dbReference type="ChEBI" id="CHEBI:30616"/>
        <note>ligand shared between two neighboring subunits</note>
    </ligand>
</feature>
<feature type="binding site" description="in other chain" evidence="1">
    <location>
        <position position="270"/>
    </location>
    <ligand>
        <name>L-methionine</name>
        <dbReference type="ChEBI" id="CHEBI:57844"/>
        <note>ligand shared between two neighboring subunits</note>
    </ligand>
</feature>
<comment type="function">
    <text evidence="1">Catalyzes the formation of S-adenosylmethionine (AdoMet) from methionine and ATP. The overall synthetic reaction is composed of two sequential steps, AdoMet formation and the subsequent tripolyphosphate hydrolysis which occurs prior to release of AdoMet from the enzyme.</text>
</comment>
<comment type="catalytic activity">
    <reaction evidence="1">
        <text>L-methionine + ATP + H2O = S-adenosyl-L-methionine + phosphate + diphosphate</text>
        <dbReference type="Rhea" id="RHEA:21080"/>
        <dbReference type="ChEBI" id="CHEBI:15377"/>
        <dbReference type="ChEBI" id="CHEBI:30616"/>
        <dbReference type="ChEBI" id="CHEBI:33019"/>
        <dbReference type="ChEBI" id="CHEBI:43474"/>
        <dbReference type="ChEBI" id="CHEBI:57844"/>
        <dbReference type="ChEBI" id="CHEBI:59789"/>
        <dbReference type="EC" id="2.5.1.6"/>
    </reaction>
</comment>
<comment type="cofactor">
    <cofactor evidence="1">
        <name>Mg(2+)</name>
        <dbReference type="ChEBI" id="CHEBI:18420"/>
    </cofactor>
    <text evidence="1">Binds 2 divalent ions per subunit.</text>
</comment>
<comment type="cofactor">
    <cofactor evidence="1">
        <name>K(+)</name>
        <dbReference type="ChEBI" id="CHEBI:29103"/>
    </cofactor>
    <text evidence="1">Binds 1 potassium ion per subunit.</text>
</comment>
<comment type="pathway">
    <text evidence="1">Amino-acid biosynthesis; S-adenosyl-L-methionine biosynthesis; S-adenosyl-L-methionine from L-methionine: step 1/1.</text>
</comment>
<comment type="subunit">
    <text evidence="1">Homotetramer; dimer of dimers.</text>
</comment>
<comment type="subcellular location">
    <subcellularLocation>
        <location evidence="1">Cytoplasm</location>
    </subcellularLocation>
</comment>
<comment type="similarity">
    <text evidence="1">Belongs to the AdoMet synthase family.</text>
</comment>
<protein>
    <recommendedName>
        <fullName evidence="1">S-adenosylmethionine synthase</fullName>
        <shortName evidence="1">AdoMet synthase</shortName>
        <ecNumber evidence="1">2.5.1.6</ecNumber>
    </recommendedName>
    <alternativeName>
        <fullName evidence="1">MAT</fullName>
    </alternativeName>
    <alternativeName>
        <fullName evidence="1">Methionine adenosyltransferase</fullName>
    </alternativeName>
</protein>
<reference key="1">
    <citation type="journal article" date="2003" name="Proc. Natl. Acad. Sci. U.S.A.">
        <title>The complete genome sequence of the carcinogenic bacterium Helicobacter hepaticus.</title>
        <authorList>
            <person name="Suerbaum S."/>
            <person name="Josenhans C."/>
            <person name="Sterzenbach T."/>
            <person name="Drescher B."/>
            <person name="Brandt P."/>
            <person name="Bell M."/>
            <person name="Droege M."/>
            <person name="Fartmann B."/>
            <person name="Fischer H.-P."/>
            <person name="Ge Z."/>
            <person name="Hoerster A."/>
            <person name="Holland R."/>
            <person name="Klein K."/>
            <person name="Koenig J."/>
            <person name="Macko L."/>
            <person name="Mendz G.L."/>
            <person name="Nyakatura G."/>
            <person name="Schauer D.B."/>
            <person name="Shen Z."/>
            <person name="Weber J."/>
            <person name="Frosch M."/>
            <person name="Fox J.G."/>
        </authorList>
    </citation>
    <scope>NUCLEOTIDE SEQUENCE [LARGE SCALE GENOMIC DNA]</scope>
    <source>
        <strain>ATCC 51449 / 3B1</strain>
    </source>
</reference>
<sequence>MKKSFLFTSESVTEGHPDKMADQISDAVLDYIIERDKKARVACETLVSNGFCVIAGELKTSVYAPMQEIARKVVQEIGYTDALYGFDYRSAAVLNGIGEQSPDINQGVDREDGEIGAGDQGLMFGYACKETPSLMPLPIWLSHRLTEGLAKKRKDGTLPFLRPDGKSQVTVRYEDGKPVSIDTIVISTQHSPETQQSHLKDAVIEEIVQKVLPQEYLNDNIRYFVNPTGKFVIGGPQGDAGLTGRKIIVDTYGGSCPHGGGAFSGKDPSKVDRSAAYAARYVAKNLVASGVCDKAIVQVAYAIGVVEPVSILVDTQGTGKVEDSKLTECVKAVFRLTPKGIIESLDLLRPIYRKTAAYGHFGRELNEFSWEKTDKVEAIKDFCGIK</sequence>
<evidence type="ECO:0000255" key="1">
    <source>
        <dbReference type="HAMAP-Rule" id="MF_00086"/>
    </source>
</evidence>
<keyword id="KW-0067">ATP-binding</keyword>
<keyword id="KW-0963">Cytoplasm</keyword>
<keyword id="KW-0460">Magnesium</keyword>
<keyword id="KW-0479">Metal-binding</keyword>
<keyword id="KW-0547">Nucleotide-binding</keyword>
<keyword id="KW-0554">One-carbon metabolism</keyword>
<keyword id="KW-0630">Potassium</keyword>
<keyword id="KW-1185">Reference proteome</keyword>
<keyword id="KW-0808">Transferase</keyword>
<organism>
    <name type="scientific">Helicobacter hepaticus (strain ATCC 51449 / 3B1)</name>
    <dbReference type="NCBI Taxonomy" id="235279"/>
    <lineage>
        <taxon>Bacteria</taxon>
        <taxon>Pseudomonadati</taxon>
        <taxon>Campylobacterota</taxon>
        <taxon>Epsilonproteobacteria</taxon>
        <taxon>Campylobacterales</taxon>
        <taxon>Helicobacteraceae</taxon>
        <taxon>Helicobacter</taxon>
    </lineage>
</organism>
<accession>Q7VFY5</accession>
<dbReference type="EC" id="2.5.1.6" evidence="1"/>
<dbReference type="EMBL" id="AE017125">
    <property type="protein sequence ID" value="AAP78137.1"/>
    <property type="molecule type" value="Genomic_DNA"/>
</dbReference>
<dbReference type="RefSeq" id="WP_011116380.1">
    <property type="nucleotide sequence ID" value="NC_004917.1"/>
</dbReference>
<dbReference type="SMR" id="Q7VFY5"/>
<dbReference type="STRING" id="235279.HH_1540"/>
<dbReference type="KEGG" id="hhe:HH_1540"/>
<dbReference type="eggNOG" id="COG0192">
    <property type="taxonomic scope" value="Bacteria"/>
</dbReference>
<dbReference type="HOGENOM" id="CLU_041802_1_1_7"/>
<dbReference type="OrthoDB" id="9801686at2"/>
<dbReference type="UniPathway" id="UPA00315">
    <property type="reaction ID" value="UER00080"/>
</dbReference>
<dbReference type="Proteomes" id="UP000002495">
    <property type="component" value="Chromosome"/>
</dbReference>
<dbReference type="GO" id="GO:0005737">
    <property type="term" value="C:cytoplasm"/>
    <property type="evidence" value="ECO:0007669"/>
    <property type="project" value="UniProtKB-SubCell"/>
</dbReference>
<dbReference type="GO" id="GO:0005524">
    <property type="term" value="F:ATP binding"/>
    <property type="evidence" value="ECO:0007669"/>
    <property type="project" value="UniProtKB-UniRule"/>
</dbReference>
<dbReference type="GO" id="GO:0000287">
    <property type="term" value="F:magnesium ion binding"/>
    <property type="evidence" value="ECO:0007669"/>
    <property type="project" value="UniProtKB-UniRule"/>
</dbReference>
<dbReference type="GO" id="GO:0004478">
    <property type="term" value="F:methionine adenosyltransferase activity"/>
    <property type="evidence" value="ECO:0007669"/>
    <property type="project" value="UniProtKB-UniRule"/>
</dbReference>
<dbReference type="GO" id="GO:0006730">
    <property type="term" value="P:one-carbon metabolic process"/>
    <property type="evidence" value="ECO:0007669"/>
    <property type="project" value="UniProtKB-KW"/>
</dbReference>
<dbReference type="GO" id="GO:0006556">
    <property type="term" value="P:S-adenosylmethionine biosynthetic process"/>
    <property type="evidence" value="ECO:0007669"/>
    <property type="project" value="UniProtKB-UniRule"/>
</dbReference>
<dbReference type="CDD" id="cd18079">
    <property type="entry name" value="S-AdoMet_synt"/>
    <property type="match status" value="1"/>
</dbReference>
<dbReference type="FunFam" id="3.30.300.10:FF:000003">
    <property type="entry name" value="S-adenosylmethionine synthase"/>
    <property type="match status" value="1"/>
</dbReference>
<dbReference type="Gene3D" id="3.30.300.10">
    <property type="match status" value="3"/>
</dbReference>
<dbReference type="HAMAP" id="MF_00086">
    <property type="entry name" value="S_AdoMet_synth1"/>
    <property type="match status" value="1"/>
</dbReference>
<dbReference type="InterPro" id="IPR022631">
    <property type="entry name" value="ADOMET_SYNTHASE_CS"/>
</dbReference>
<dbReference type="InterPro" id="IPR022630">
    <property type="entry name" value="S-AdoMet_synt_C"/>
</dbReference>
<dbReference type="InterPro" id="IPR022629">
    <property type="entry name" value="S-AdoMet_synt_central"/>
</dbReference>
<dbReference type="InterPro" id="IPR022628">
    <property type="entry name" value="S-AdoMet_synt_N"/>
</dbReference>
<dbReference type="InterPro" id="IPR002133">
    <property type="entry name" value="S-AdoMet_synthetase"/>
</dbReference>
<dbReference type="InterPro" id="IPR022636">
    <property type="entry name" value="S-AdoMet_synthetase_sfam"/>
</dbReference>
<dbReference type="NCBIfam" id="TIGR01034">
    <property type="entry name" value="metK"/>
    <property type="match status" value="1"/>
</dbReference>
<dbReference type="PANTHER" id="PTHR11964">
    <property type="entry name" value="S-ADENOSYLMETHIONINE SYNTHETASE"/>
    <property type="match status" value="1"/>
</dbReference>
<dbReference type="Pfam" id="PF02773">
    <property type="entry name" value="S-AdoMet_synt_C"/>
    <property type="match status" value="1"/>
</dbReference>
<dbReference type="Pfam" id="PF02772">
    <property type="entry name" value="S-AdoMet_synt_M"/>
    <property type="match status" value="1"/>
</dbReference>
<dbReference type="Pfam" id="PF00438">
    <property type="entry name" value="S-AdoMet_synt_N"/>
    <property type="match status" value="1"/>
</dbReference>
<dbReference type="PIRSF" id="PIRSF000497">
    <property type="entry name" value="MAT"/>
    <property type="match status" value="1"/>
</dbReference>
<dbReference type="SUPFAM" id="SSF55973">
    <property type="entry name" value="S-adenosylmethionine synthetase"/>
    <property type="match status" value="3"/>
</dbReference>
<dbReference type="PROSITE" id="PS00376">
    <property type="entry name" value="ADOMET_SYNTHASE_1"/>
    <property type="match status" value="1"/>
</dbReference>
<dbReference type="PROSITE" id="PS00377">
    <property type="entry name" value="ADOMET_SYNTHASE_2"/>
    <property type="match status" value="1"/>
</dbReference>